<name>PHP_ECOLI</name>
<dbReference type="EC" id="3.1.-.-" evidence="2"/>
<dbReference type="EMBL" id="U18997">
    <property type="protein sequence ID" value="AAA58176.1"/>
    <property type="molecule type" value="Genomic_DNA"/>
</dbReference>
<dbReference type="EMBL" id="U00096">
    <property type="protein sequence ID" value="AAC76404.1"/>
    <property type="molecule type" value="Genomic_DNA"/>
</dbReference>
<dbReference type="EMBL" id="AP009048">
    <property type="protein sequence ID" value="BAE77912.1"/>
    <property type="molecule type" value="Genomic_DNA"/>
</dbReference>
<dbReference type="PIR" id="F65132">
    <property type="entry name" value="F65132"/>
</dbReference>
<dbReference type="RefSeq" id="NP_417838.1">
    <property type="nucleotide sequence ID" value="NC_000913.3"/>
</dbReference>
<dbReference type="RefSeq" id="WP_000007010.1">
    <property type="nucleotide sequence ID" value="NZ_SSZK01000008.1"/>
</dbReference>
<dbReference type="PDB" id="1BF6">
    <property type="method" value="X-ray"/>
    <property type="resolution" value="1.70 A"/>
    <property type="chains" value="A/B=2-292"/>
</dbReference>
<dbReference type="PDB" id="4LEF">
    <property type="method" value="X-ray"/>
    <property type="resolution" value="1.84 A"/>
    <property type="chains" value="A/B/C/D/E/F/G/H=1-292"/>
</dbReference>
<dbReference type="PDBsum" id="1BF6"/>
<dbReference type="PDBsum" id="4LEF"/>
<dbReference type="SMR" id="P45548"/>
<dbReference type="BioGRID" id="4260764">
    <property type="interactions" value="10"/>
</dbReference>
<dbReference type="DIP" id="DIP-10504N"/>
<dbReference type="FunCoup" id="P45548">
    <property type="interactions" value="218"/>
</dbReference>
<dbReference type="IntAct" id="P45548">
    <property type="interactions" value="2"/>
</dbReference>
<dbReference type="STRING" id="511145.b3379"/>
<dbReference type="PaxDb" id="511145-b3379"/>
<dbReference type="EnsemblBacteria" id="AAC76404">
    <property type="protein sequence ID" value="AAC76404"/>
    <property type="gene ID" value="b3379"/>
</dbReference>
<dbReference type="GeneID" id="947891"/>
<dbReference type="KEGG" id="ecj:JW3342"/>
<dbReference type="KEGG" id="eco:b3379"/>
<dbReference type="KEGG" id="ecoc:C3026_18340"/>
<dbReference type="PATRIC" id="fig|1411691.4.peg.3351"/>
<dbReference type="EchoBASE" id="EB2753"/>
<dbReference type="eggNOG" id="COG1735">
    <property type="taxonomic scope" value="Bacteria"/>
</dbReference>
<dbReference type="HOGENOM" id="CLU_054760_1_1_6"/>
<dbReference type="InParanoid" id="P45548"/>
<dbReference type="OMA" id="MVKCGFI"/>
<dbReference type="OrthoDB" id="9795018at2"/>
<dbReference type="PhylomeDB" id="P45548"/>
<dbReference type="BioCyc" id="EcoCyc:G7731-MONOMER"/>
<dbReference type="EvolutionaryTrace" id="P45548"/>
<dbReference type="PRO" id="PR:P45548"/>
<dbReference type="Proteomes" id="UP000000625">
    <property type="component" value="Chromosome"/>
</dbReference>
<dbReference type="GO" id="GO:0016788">
    <property type="term" value="F:hydrolase activity, acting on ester bonds"/>
    <property type="evidence" value="ECO:0007669"/>
    <property type="project" value="InterPro"/>
</dbReference>
<dbReference type="GO" id="GO:0008270">
    <property type="term" value="F:zinc ion binding"/>
    <property type="evidence" value="ECO:0000314"/>
    <property type="project" value="EcoCyc"/>
</dbReference>
<dbReference type="GO" id="GO:0009056">
    <property type="term" value="P:catabolic process"/>
    <property type="evidence" value="ECO:0007669"/>
    <property type="project" value="InterPro"/>
</dbReference>
<dbReference type="CDD" id="cd00530">
    <property type="entry name" value="PTE"/>
    <property type="match status" value="1"/>
</dbReference>
<dbReference type="FunFam" id="3.20.20.140:FF:000063">
    <property type="entry name" value="Phosphotriesterase homology protein"/>
    <property type="match status" value="1"/>
</dbReference>
<dbReference type="Gene3D" id="3.20.20.140">
    <property type="entry name" value="Metal-dependent hydrolases"/>
    <property type="match status" value="1"/>
</dbReference>
<dbReference type="InterPro" id="IPR017947">
    <property type="entry name" value="AryldialkylPase_Zn-BS"/>
</dbReference>
<dbReference type="InterPro" id="IPR032466">
    <property type="entry name" value="Metal_Hydrolase"/>
</dbReference>
<dbReference type="InterPro" id="IPR001559">
    <property type="entry name" value="Phosphotriesterase"/>
</dbReference>
<dbReference type="NCBIfam" id="NF007373">
    <property type="entry name" value="PRK09875.1"/>
    <property type="match status" value="1"/>
</dbReference>
<dbReference type="PANTHER" id="PTHR10819">
    <property type="entry name" value="PHOSPHOTRIESTERASE-RELATED"/>
    <property type="match status" value="1"/>
</dbReference>
<dbReference type="PANTHER" id="PTHR10819:SF3">
    <property type="entry name" value="PHOSPHOTRIESTERASE-RELATED PROTEIN"/>
    <property type="match status" value="1"/>
</dbReference>
<dbReference type="Pfam" id="PF02126">
    <property type="entry name" value="PTE"/>
    <property type="match status" value="1"/>
</dbReference>
<dbReference type="PIRSF" id="PIRSF016839">
    <property type="entry name" value="PhP"/>
    <property type="match status" value="1"/>
</dbReference>
<dbReference type="SUPFAM" id="SSF51556">
    <property type="entry name" value="Metallo-dependent hydrolases"/>
    <property type="match status" value="1"/>
</dbReference>
<dbReference type="PROSITE" id="PS01322">
    <property type="entry name" value="PHOSPHOTRIESTERASE_1"/>
    <property type="match status" value="1"/>
</dbReference>
<dbReference type="PROSITE" id="PS51347">
    <property type="entry name" value="PHOSPHOTRIESTERASE_2"/>
    <property type="match status" value="1"/>
</dbReference>
<proteinExistence type="evidence at protein level"/>
<feature type="chain" id="PRO_0000205362" description="Phosphotriesterase homology protein">
    <location>
        <begin position="1"/>
        <end position="292"/>
    </location>
</feature>
<feature type="binding site" evidence="2 3 6 7">
    <location>
        <position position="12"/>
    </location>
    <ligand>
        <name>Zn(2+)</name>
        <dbReference type="ChEBI" id="CHEBI:29105"/>
        <label>1</label>
    </ligand>
</feature>
<feature type="binding site" evidence="2 3 6 7">
    <location>
        <position position="14"/>
    </location>
    <ligand>
        <name>Zn(2+)</name>
        <dbReference type="ChEBI" id="CHEBI:29105"/>
        <label>1</label>
    </ligand>
</feature>
<feature type="binding site" evidence="2 3 6 7">
    <location>
        <position position="125"/>
    </location>
    <ligand>
        <name>Zn(2+)</name>
        <dbReference type="ChEBI" id="CHEBI:29105"/>
        <label>1</label>
    </ligand>
</feature>
<feature type="binding site" evidence="2 3 6 7">
    <location>
        <position position="125"/>
    </location>
    <ligand>
        <name>Zn(2+)</name>
        <dbReference type="ChEBI" id="CHEBI:29105"/>
        <label>2</label>
    </ligand>
</feature>
<feature type="binding site" evidence="2 7">
    <location>
        <begin position="148"/>
        <end position="149"/>
    </location>
    <ligand>
        <name>beta-D-glucose</name>
        <dbReference type="ChEBI" id="CHEBI:15903"/>
    </ligand>
</feature>
<feature type="binding site" evidence="2 3 6 7">
    <location>
        <position position="158"/>
    </location>
    <ligand>
        <name>Zn(2+)</name>
        <dbReference type="ChEBI" id="CHEBI:29105"/>
        <label>2</label>
    </ligand>
</feature>
<feature type="binding site" evidence="2 7">
    <location>
        <position position="176"/>
    </location>
    <ligand>
        <name>beta-D-glucose</name>
        <dbReference type="ChEBI" id="CHEBI:15903"/>
    </ligand>
</feature>
<feature type="binding site" evidence="2 7">
    <location>
        <position position="178"/>
    </location>
    <ligand>
        <name>beta-D-glucose</name>
        <dbReference type="ChEBI" id="CHEBI:15903"/>
    </ligand>
</feature>
<feature type="binding site" evidence="2 7">
    <location>
        <position position="181"/>
    </location>
    <ligand>
        <name>beta-D-glucose</name>
        <dbReference type="ChEBI" id="CHEBI:15903"/>
    </ligand>
</feature>
<feature type="binding site" evidence="2 3 6 7">
    <location>
        <position position="186"/>
    </location>
    <ligand>
        <name>Zn(2+)</name>
        <dbReference type="ChEBI" id="CHEBI:29105"/>
        <label>2</label>
    </ligand>
</feature>
<feature type="binding site" evidence="2 3 6 7">
    <location>
        <position position="243"/>
    </location>
    <ligand>
        <name>Zn(2+)</name>
        <dbReference type="ChEBI" id="CHEBI:29105"/>
        <label>1</label>
    </ligand>
</feature>
<feature type="binding site" evidence="2 7">
    <location>
        <position position="280"/>
    </location>
    <ligand>
        <name>beta-D-glucose</name>
        <dbReference type="ChEBI" id="CHEBI:15903"/>
    </ligand>
</feature>
<feature type="binding site" evidence="2 7">
    <location>
        <position position="284"/>
    </location>
    <ligand>
        <name>beta-D-glucose</name>
        <dbReference type="ChEBI" id="CHEBI:15903"/>
    </ligand>
</feature>
<feature type="strand" evidence="8">
    <location>
        <begin position="7"/>
        <end position="13"/>
    </location>
</feature>
<feature type="strand" evidence="8">
    <location>
        <begin position="15"/>
        <end position="18"/>
    </location>
</feature>
<feature type="helix" evidence="8">
    <location>
        <begin position="20"/>
        <end position="23"/>
    </location>
</feature>
<feature type="helix" evidence="8">
    <location>
        <begin position="26"/>
        <end position="28"/>
    </location>
</feature>
<feature type="helix" evidence="8">
    <location>
        <begin position="33"/>
        <end position="45"/>
    </location>
</feature>
<feature type="strand" evidence="8">
    <location>
        <begin position="48"/>
        <end position="53"/>
    </location>
</feature>
<feature type="helix" evidence="8">
    <location>
        <begin position="57"/>
        <end position="59"/>
    </location>
</feature>
<feature type="helix" evidence="8">
    <location>
        <begin position="63"/>
        <end position="73"/>
    </location>
</feature>
<feature type="strand" evidence="8">
    <location>
        <begin position="76"/>
        <end position="81"/>
    </location>
</feature>
<feature type="helix" evidence="8">
    <location>
        <begin position="86"/>
        <end position="88"/>
    </location>
</feature>
<feature type="helix" evidence="8">
    <location>
        <begin position="92"/>
        <end position="95"/>
    </location>
</feature>
<feature type="helix" evidence="8">
    <location>
        <begin position="98"/>
        <end position="110"/>
    </location>
</feature>
<feature type="strand" evidence="8">
    <location>
        <begin position="120"/>
        <end position="127"/>
    </location>
</feature>
<feature type="helix" evidence="8">
    <location>
        <begin position="135"/>
        <end position="151"/>
    </location>
</feature>
<feature type="strand" evidence="8">
    <location>
        <begin position="155"/>
        <end position="158"/>
    </location>
</feature>
<feature type="helix" evidence="8">
    <location>
        <begin position="160"/>
        <end position="162"/>
    </location>
</feature>
<feature type="helix" evidence="8">
    <location>
        <begin position="165"/>
        <end position="174"/>
    </location>
</feature>
<feature type="helix" evidence="8">
    <location>
        <begin position="179"/>
        <end position="181"/>
    </location>
</feature>
<feature type="strand" evidence="8">
    <location>
        <begin position="182"/>
        <end position="184"/>
    </location>
</feature>
<feature type="helix" evidence="8">
    <location>
        <begin position="193"/>
        <end position="201"/>
    </location>
</feature>
<feature type="strand" evidence="8">
    <location>
        <begin position="205"/>
        <end position="208"/>
    </location>
</feature>
<feature type="turn" evidence="8">
    <location>
        <begin position="214"/>
        <end position="216"/>
    </location>
</feature>
<feature type="helix" evidence="8">
    <location>
        <begin position="219"/>
        <end position="231"/>
    </location>
</feature>
<feature type="helix" evidence="8">
    <location>
        <begin position="235"/>
        <end position="237"/>
    </location>
</feature>
<feature type="strand" evidence="8">
    <location>
        <begin position="238"/>
        <end position="240"/>
    </location>
</feature>
<feature type="helix" evidence="8">
    <location>
        <begin position="247"/>
        <end position="249"/>
    </location>
</feature>
<feature type="helix" evidence="8">
    <location>
        <begin position="251"/>
        <end position="253"/>
    </location>
</feature>
<feature type="helix" evidence="8">
    <location>
        <begin position="260"/>
        <end position="263"/>
    </location>
</feature>
<feature type="helix" evidence="8">
    <location>
        <begin position="265"/>
        <end position="271"/>
    </location>
</feature>
<feature type="helix" evidence="8">
    <location>
        <begin position="276"/>
        <end position="283"/>
    </location>
</feature>
<feature type="helix" evidence="8">
    <location>
        <begin position="285"/>
        <end position="290"/>
    </location>
</feature>
<evidence type="ECO:0000255" key="1">
    <source>
        <dbReference type="PROSITE-ProRule" id="PRU00679"/>
    </source>
</evidence>
<evidence type="ECO:0000269" key="2">
    <source>
    </source>
</evidence>
<evidence type="ECO:0000269" key="3">
    <source>
    </source>
</evidence>
<evidence type="ECO:0000303" key="4">
    <source>
    </source>
</evidence>
<evidence type="ECO:0000303" key="5">
    <source>
    </source>
</evidence>
<evidence type="ECO:0007744" key="6">
    <source>
        <dbReference type="PDB" id="1BF6"/>
    </source>
</evidence>
<evidence type="ECO:0007744" key="7">
    <source>
        <dbReference type="PDB" id="4LEF"/>
    </source>
</evidence>
<evidence type="ECO:0007829" key="8">
    <source>
        <dbReference type="PDB" id="1BF6"/>
    </source>
</evidence>
<keyword id="KW-0002">3D-structure</keyword>
<keyword id="KW-0903">Direct protein sequencing</keyword>
<keyword id="KW-0378">Hydrolase</keyword>
<keyword id="KW-0479">Metal-binding</keyword>
<keyword id="KW-1185">Reference proteome</keyword>
<keyword id="KW-0862">Zinc</keyword>
<gene>
    <name evidence="4 5" type="primary">php</name>
    <name type="synonym">yhfV</name>
    <name type="ordered locus">b3379</name>
    <name type="ordered locus">JW3342</name>
</gene>
<protein>
    <recommendedName>
        <fullName evidence="4 5">Phosphotriesterase homology protein</fullName>
        <ecNumber evidence="2">3.1.-.-</ecNumber>
    </recommendedName>
</protein>
<accession>P45548</accession>
<accession>Q2M744</accession>
<reference key="1">
    <citation type="journal article" date="1997" name="Science">
        <title>The complete genome sequence of Escherichia coli K-12.</title>
        <authorList>
            <person name="Blattner F.R."/>
            <person name="Plunkett G. III"/>
            <person name="Bloch C.A."/>
            <person name="Perna N.T."/>
            <person name="Burland V."/>
            <person name="Riley M."/>
            <person name="Collado-Vides J."/>
            <person name="Glasner J.D."/>
            <person name="Rode C.K."/>
            <person name="Mayhew G.F."/>
            <person name="Gregor J."/>
            <person name="Davis N.W."/>
            <person name="Kirkpatrick H.A."/>
            <person name="Goeden M.A."/>
            <person name="Rose D.J."/>
            <person name="Mau B."/>
            <person name="Shao Y."/>
        </authorList>
    </citation>
    <scope>NUCLEOTIDE SEQUENCE [LARGE SCALE GENOMIC DNA]</scope>
    <source>
        <strain>K12 / MG1655 / ATCC 47076</strain>
    </source>
</reference>
<reference key="2">
    <citation type="journal article" date="2006" name="Mol. Syst. Biol.">
        <title>Highly accurate genome sequences of Escherichia coli K-12 strains MG1655 and W3110.</title>
        <authorList>
            <person name="Hayashi K."/>
            <person name="Morooka N."/>
            <person name="Yamamoto Y."/>
            <person name="Fujita K."/>
            <person name="Isono K."/>
            <person name="Choi S."/>
            <person name="Ohtsubo E."/>
            <person name="Baba T."/>
            <person name="Wanner B.L."/>
            <person name="Mori H."/>
            <person name="Horiuchi T."/>
        </authorList>
    </citation>
    <scope>NUCLEOTIDE SEQUENCE [LARGE SCALE GENOMIC DNA]</scope>
    <source>
        <strain>K12 / W3110 / ATCC 27325 / DSM 5911</strain>
    </source>
</reference>
<reference evidence="6" key="3">
    <citation type="journal article" date="1998" name="Biochemistry">
        <title>Biochemical characterization and crystallographic structure of an Escherichia coli protein from the phosphotriesterase gene family.</title>
        <authorList>
            <person name="Buchbinder J.L."/>
            <person name="Stephenson R.C."/>
            <person name="Dresser M.J."/>
            <person name="Pitera J.W."/>
            <person name="Scanlan T.S."/>
            <person name="Fletterick R.J."/>
        </authorList>
    </citation>
    <scope>X-RAY CRYSTALLOGRAPHY (1.7 ANGSTROMS) IN COMPLEX WITH ZINC</scope>
    <scope>PARTIAL PROTEIN SEQUENCE</scope>
    <scope>FUNCTION</scope>
    <scope>COFACTOR</scope>
    <scope>SUBUNIT</scope>
    <scope>CIRCULAR DICHROISM ANALYSIS</scope>
</reference>
<reference key="4">
    <citation type="journal article" date="1998" name="Biochemistry">
        <authorList>
            <person name="Buchbinder J.L."/>
            <person name="Stephenson R.C."/>
            <person name="Dresser M.J."/>
            <person name="Pitera J.W."/>
            <person name="Scanlan T.S."/>
            <person name="Fletterick R.J."/>
        </authorList>
    </citation>
    <scope>ERRATUM OF PUBMED:9548740</scope>
</reference>
<reference evidence="7" key="5">
    <citation type="journal article" date="2018" name="Biochemistry">
        <title>Substrate Profile of the Phosphotriesterase Homology Protein from Escherichia coli.</title>
        <authorList>
            <person name="Nemmara V.V."/>
            <person name="Xiang D.F."/>
            <person name="Fedorov A.A."/>
            <person name="Fedorov E.V."/>
            <person name="Bonanno J.B."/>
            <person name="Almo S.C."/>
            <person name="Raushel F.M."/>
        </authorList>
    </citation>
    <scope>X-RAY CRYSTALLOGRAPHY (1.84 ANGSTROMS) IN COMPLEX WITH BETA-D-GLUCOSE AND ZINC</scope>
    <scope>FUNCTION</scope>
    <scope>CATALYTIC ACTIVITY</scope>
    <scope>COFACTOR</scope>
    <scope>ACTIVITY REGULATION</scope>
    <scope>BIOPHYSICOCHEMICAL PROPERTIES</scope>
    <scope>SUBSTRATE SPECIFICITY</scope>
</reference>
<organism>
    <name type="scientific">Escherichia coli (strain K12)</name>
    <dbReference type="NCBI Taxonomy" id="83333"/>
    <lineage>
        <taxon>Bacteria</taxon>
        <taxon>Pseudomonadati</taxon>
        <taxon>Pseudomonadota</taxon>
        <taxon>Gammaproteobacteria</taxon>
        <taxon>Enterobacterales</taxon>
        <taxon>Enterobacteriaceae</taxon>
        <taxon>Escherichia</taxon>
    </lineage>
</organism>
<sequence>MSFDPTGYTLAHEHLHIDLSGFKNNVDCRLDQYAFICQEMNDLMTRGVRNVIEMTNRYMGRNAQFMLDVMRETGINVVACTGYYQDAFFPEHVATRSVQELAQEMVDEIEQGIDGTELKAGIIAEIGTSEGKITPLEEKVFIAAALAHNQTGRPISTHTSFSTMGLEQLALLQAHGVDLSRVTVGHCDLKDNLDNILKMIDLGAYVQFDTIGKNSYYPDEKRIAMLHALRDRGLLNRVMLSMDITRRSHLKANGGYGYDYLLTTFIPQLRQSGFSQADVDVMLRENPSQFFQ</sequence>
<comment type="function">
    <text evidence="2 3">Catalyzes the hydrolysis of phosphorylated glyceryl acetates in which the presence of a phosphate group is required for the enzymatic hydrolysis. Hydrolyzes a dibutyl glycerol derivative suggesting it acts on phosphoglycerol substrates with a butyrate leaving group. Also active with aromatic acetates and propionates. No activity with various sugar phosphates, with various nitrophenylphosphate or nitrophenylphosphonate derivatives, or with phosphorylated or non-phosphorylated sugar lactones tested. Does not hydrolyze non-phosphorylated carboxyesters with long chain leaving groups (PubMed:30277746). No general esterase, aminopeptidase, sulfatase, phosphatase, carbonic anhydrase, phosphodiesterase, and phosphotriesterase activities detected when tested with the following non-specific substrates: p-nitrophenyl acetate, L-alanine nitroanilide, p-nitrophenyl sulfate, bis(p-nitrophenyl) phosphate, paraoxon, and p-nitrophenyl phosphate (PubMed:9548740).</text>
</comment>
<comment type="cofactor">
    <cofactor evidence="2 3">
        <name>Zn(2+)</name>
        <dbReference type="ChEBI" id="CHEBI:29105"/>
    </cofactor>
    <text evidence="2 3">Binds 2 Zn(2+) ions per subunit.</text>
</comment>
<comment type="activity regulation">
    <text evidence="2">Activity is higher in the enzyme containing Mn(2+) than that containing Zn(2+).</text>
</comment>
<comment type="biophysicochemical properties">
    <kinetics>
        <KM evidence="2">1.8 mM for 2-naphthyl acetate (in the presence of 1.0 mM MnCl(2), at pH 8.0 and 30 degrees Celsius)</KM>
        <KM evidence="2">5.5 mM for (2S)-1,2-diacetyl glycerol-3-phosphate (in the presence of 1.0 mM MnCl(2), at pH 8.0 and 30 degrees Celsius)</KM>
        <KM evidence="2">6 mM for rac-(2R,2S)-1,2-diacetyl glycerol-3-phosphate (in the presence of 1.0 mM MnCl(2), at pH 8.0 and 30 degrees Celsius)</KM>
        <text evidence="2">kcat is 2.5 sec(-1) with 2-naphthyl acetate as substrate. kcat is 27 sec(-1) with (2S)-1,2-diacetyl glycerol-3-phosphate as substrate. kcat is 28 sec(-1) with rac-(2R,2S)-1,2-diacetyl glycerol-3-phosphate as substrate.</text>
    </kinetics>
</comment>
<comment type="subunit">
    <text evidence="3">Monomer.</text>
</comment>
<comment type="similarity">
    <text evidence="1">Belongs to the metallo-dependent hydrolases superfamily. Phosphotriesterase family.</text>
</comment>